<sequence>MYAIIKTGGKQIKVEEGQTVYIEKLAAEAGETVTFEDVLFVGGDNVKVGNPTVEGATVTAKVEKQGRAKKITVFRYKPKKNVHKKQGHRQPYTKVTIEKINA</sequence>
<proteinExistence type="evidence at protein level"/>
<comment type="function">
    <text evidence="1">This protein binds to 23S rRNA in the presence of protein L20.</text>
</comment>
<comment type="subunit">
    <text evidence="1 2">Part of the 50S ribosomal subunit (PubMed:30126986). Contacts protein L20 (By similarity).</text>
</comment>
<comment type="similarity">
    <text evidence="1">Belongs to the bacterial ribosomal protein bL21 family.</text>
</comment>
<reference key="1">
    <citation type="journal article" date="1991" name="J. Mol. Biol.">
        <title>Sporulation operon spoIVF and the characterization of mutations that uncouple mother-cell from forespore gene expression in Bacillus subtilis.</title>
        <authorList>
            <person name="Cutting S.M."/>
            <person name="Roels S."/>
            <person name="Losick R."/>
        </authorList>
    </citation>
    <scope>NUCLEOTIDE SEQUENCE [GENOMIC DNA]</scope>
    <source>
        <strain>168</strain>
    </source>
</reference>
<reference key="2">
    <citation type="journal article" date="1997" name="Nature">
        <title>The complete genome sequence of the Gram-positive bacterium Bacillus subtilis.</title>
        <authorList>
            <person name="Kunst F."/>
            <person name="Ogasawara N."/>
            <person name="Moszer I."/>
            <person name="Albertini A.M."/>
            <person name="Alloni G."/>
            <person name="Azevedo V."/>
            <person name="Bertero M.G."/>
            <person name="Bessieres P."/>
            <person name="Bolotin A."/>
            <person name="Borchert S."/>
            <person name="Borriss R."/>
            <person name="Boursier L."/>
            <person name="Brans A."/>
            <person name="Braun M."/>
            <person name="Brignell S.C."/>
            <person name="Bron S."/>
            <person name="Brouillet S."/>
            <person name="Bruschi C.V."/>
            <person name="Caldwell B."/>
            <person name="Capuano V."/>
            <person name="Carter N.M."/>
            <person name="Choi S.-K."/>
            <person name="Codani J.-J."/>
            <person name="Connerton I.F."/>
            <person name="Cummings N.J."/>
            <person name="Daniel R.A."/>
            <person name="Denizot F."/>
            <person name="Devine K.M."/>
            <person name="Duesterhoeft A."/>
            <person name="Ehrlich S.D."/>
            <person name="Emmerson P.T."/>
            <person name="Entian K.-D."/>
            <person name="Errington J."/>
            <person name="Fabret C."/>
            <person name="Ferrari E."/>
            <person name="Foulger D."/>
            <person name="Fritz C."/>
            <person name="Fujita M."/>
            <person name="Fujita Y."/>
            <person name="Fuma S."/>
            <person name="Galizzi A."/>
            <person name="Galleron N."/>
            <person name="Ghim S.-Y."/>
            <person name="Glaser P."/>
            <person name="Goffeau A."/>
            <person name="Golightly E.J."/>
            <person name="Grandi G."/>
            <person name="Guiseppi G."/>
            <person name="Guy B.J."/>
            <person name="Haga K."/>
            <person name="Haiech J."/>
            <person name="Harwood C.R."/>
            <person name="Henaut A."/>
            <person name="Hilbert H."/>
            <person name="Holsappel S."/>
            <person name="Hosono S."/>
            <person name="Hullo M.-F."/>
            <person name="Itaya M."/>
            <person name="Jones L.-M."/>
            <person name="Joris B."/>
            <person name="Karamata D."/>
            <person name="Kasahara Y."/>
            <person name="Klaerr-Blanchard M."/>
            <person name="Klein C."/>
            <person name="Kobayashi Y."/>
            <person name="Koetter P."/>
            <person name="Koningstein G."/>
            <person name="Krogh S."/>
            <person name="Kumano M."/>
            <person name="Kurita K."/>
            <person name="Lapidus A."/>
            <person name="Lardinois S."/>
            <person name="Lauber J."/>
            <person name="Lazarevic V."/>
            <person name="Lee S.-M."/>
            <person name="Levine A."/>
            <person name="Liu H."/>
            <person name="Masuda S."/>
            <person name="Mauel C."/>
            <person name="Medigue C."/>
            <person name="Medina N."/>
            <person name="Mellado R.P."/>
            <person name="Mizuno M."/>
            <person name="Moestl D."/>
            <person name="Nakai S."/>
            <person name="Noback M."/>
            <person name="Noone D."/>
            <person name="O'Reilly M."/>
            <person name="Ogawa K."/>
            <person name="Ogiwara A."/>
            <person name="Oudega B."/>
            <person name="Park S.-H."/>
            <person name="Parro V."/>
            <person name="Pohl T.M."/>
            <person name="Portetelle D."/>
            <person name="Porwollik S."/>
            <person name="Prescott A.M."/>
            <person name="Presecan E."/>
            <person name="Pujic P."/>
            <person name="Purnelle B."/>
            <person name="Rapoport G."/>
            <person name="Rey M."/>
            <person name="Reynolds S."/>
            <person name="Rieger M."/>
            <person name="Rivolta C."/>
            <person name="Rocha E."/>
            <person name="Roche B."/>
            <person name="Rose M."/>
            <person name="Sadaie Y."/>
            <person name="Sato T."/>
            <person name="Scanlan E."/>
            <person name="Schleich S."/>
            <person name="Schroeter R."/>
            <person name="Scoffone F."/>
            <person name="Sekiguchi J."/>
            <person name="Sekowska A."/>
            <person name="Seror S.J."/>
            <person name="Serror P."/>
            <person name="Shin B.-S."/>
            <person name="Soldo B."/>
            <person name="Sorokin A."/>
            <person name="Tacconi E."/>
            <person name="Takagi T."/>
            <person name="Takahashi H."/>
            <person name="Takemaru K."/>
            <person name="Takeuchi M."/>
            <person name="Tamakoshi A."/>
            <person name="Tanaka T."/>
            <person name="Terpstra P."/>
            <person name="Tognoni A."/>
            <person name="Tosato V."/>
            <person name="Uchiyama S."/>
            <person name="Vandenbol M."/>
            <person name="Vannier F."/>
            <person name="Vassarotti A."/>
            <person name="Viari A."/>
            <person name="Wambutt R."/>
            <person name="Wedler E."/>
            <person name="Wedler H."/>
            <person name="Weitzenegger T."/>
            <person name="Winters P."/>
            <person name="Wipat A."/>
            <person name="Yamamoto H."/>
            <person name="Yamane K."/>
            <person name="Yasumoto K."/>
            <person name="Yata K."/>
            <person name="Yoshida K."/>
            <person name="Yoshikawa H.-F."/>
            <person name="Zumstein E."/>
            <person name="Yoshikawa H."/>
            <person name="Danchin A."/>
        </authorList>
    </citation>
    <scope>NUCLEOTIDE SEQUENCE [LARGE SCALE GENOMIC DNA]</scope>
    <source>
        <strain>168</strain>
    </source>
</reference>
<reference evidence="4 5" key="3">
    <citation type="journal article" date="2018" name="Proc. Natl. Acad. Sci. U.S.A.">
        <title>Structural basis for antibiotic resistance mediated by the Bacillus subtilis ABCF ATPase VmlR.</title>
        <authorList>
            <person name="Crowe-McAuliffe C."/>
            <person name="Graf M."/>
            <person name="Huter P."/>
            <person name="Takada H."/>
            <person name="Abdelshahid M."/>
            <person name="Novacek J."/>
            <person name="Murina V."/>
            <person name="Atkinson G.C."/>
            <person name="Hauryliuk V."/>
            <person name="Wilson D.N."/>
        </authorList>
    </citation>
    <scope>STRUCTURE BY ELECTRON MICROSCOPY (3.10 ANGSTROMS) OF 1-102 WITH AND WITHOUT VIRGINIAMYCIN M</scope>
    <scope>SUBUNIT</scope>
</reference>
<gene>
    <name evidence="1" type="primary">rplU</name>
    <name type="ordered locus">BSU27960</name>
</gene>
<evidence type="ECO:0000255" key="1">
    <source>
        <dbReference type="HAMAP-Rule" id="MF_01363"/>
    </source>
</evidence>
<evidence type="ECO:0000269" key="2">
    <source>
    </source>
</evidence>
<evidence type="ECO:0000305" key="3"/>
<evidence type="ECO:0007744" key="4">
    <source>
        <dbReference type="PDB" id="6HA1"/>
    </source>
</evidence>
<evidence type="ECO:0007744" key="5">
    <source>
        <dbReference type="PDB" id="6HA8"/>
    </source>
</evidence>
<evidence type="ECO:0007829" key="6">
    <source>
        <dbReference type="PDB" id="7AQC"/>
    </source>
</evidence>
<evidence type="ECO:0007829" key="7">
    <source>
        <dbReference type="PDB" id="8S1P"/>
    </source>
</evidence>
<protein>
    <recommendedName>
        <fullName evidence="1">Large ribosomal subunit protein bL21</fullName>
    </recommendedName>
    <alternativeName>
        <fullName evidence="3">50S ribosomal protein L21</fullName>
    </alternativeName>
    <alternativeName>
        <fullName>BL20</fullName>
    </alternativeName>
</protein>
<keyword id="KW-0002">3D-structure</keyword>
<keyword id="KW-1185">Reference proteome</keyword>
<keyword id="KW-0687">Ribonucleoprotein</keyword>
<keyword id="KW-0689">Ribosomal protein</keyword>
<keyword id="KW-0694">RNA-binding</keyword>
<keyword id="KW-0699">rRNA-binding</keyword>
<name>RL21_BACSU</name>
<accession>P26908</accession>
<feature type="chain" id="PRO_0000180990" description="Large ribosomal subunit protein bL21">
    <location>
        <begin position="1"/>
        <end position="102"/>
    </location>
</feature>
<feature type="strand" evidence="7">
    <location>
        <begin position="3"/>
        <end position="7"/>
    </location>
</feature>
<feature type="strand" evidence="7">
    <location>
        <begin position="10"/>
        <end position="14"/>
    </location>
</feature>
<feature type="strand" evidence="7">
    <location>
        <begin position="19"/>
        <end position="23"/>
    </location>
</feature>
<feature type="turn" evidence="6">
    <location>
        <begin position="27"/>
        <end position="30"/>
    </location>
</feature>
<feature type="strand" evidence="7">
    <location>
        <begin position="32"/>
        <end position="35"/>
    </location>
</feature>
<feature type="strand" evidence="7">
    <location>
        <begin position="38"/>
        <end position="41"/>
    </location>
</feature>
<feature type="strand" evidence="7">
    <location>
        <begin position="43"/>
        <end position="45"/>
    </location>
</feature>
<feature type="strand" evidence="7">
    <location>
        <begin position="50"/>
        <end position="52"/>
    </location>
</feature>
<feature type="strand" evidence="7">
    <location>
        <begin position="57"/>
        <end position="67"/>
    </location>
</feature>
<feature type="strand" evidence="7">
    <location>
        <begin position="71"/>
        <end position="77"/>
    </location>
</feature>
<feature type="turn" evidence="7">
    <location>
        <begin position="78"/>
        <end position="81"/>
    </location>
</feature>
<feature type="strand" evidence="7">
    <location>
        <begin position="82"/>
        <end position="88"/>
    </location>
</feature>
<feature type="strand" evidence="7">
    <location>
        <begin position="91"/>
        <end position="101"/>
    </location>
</feature>
<organism>
    <name type="scientific">Bacillus subtilis (strain 168)</name>
    <dbReference type="NCBI Taxonomy" id="224308"/>
    <lineage>
        <taxon>Bacteria</taxon>
        <taxon>Bacillati</taxon>
        <taxon>Bacillota</taxon>
        <taxon>Bacilli</taxon>
        <taxon>Bacillales</taxon>
        <taxon>Bacillaceae</taxon>
        <taxon>Bacillus</taxon>
    </lineage>
</organism>
<dbReference type="EMBL" id="X59528">
    <property type="protein sequence ID" value="CAA42108.1"/>
    <property type="molecule type" value="Genomic_DNA"/>
</dbReference>
<dbReference type="EMBL" id="AL009126">
    <property type="protein sequence ID" value="CAB14756.1"/>
    <property type="molecule type" value="Genomic_DNA"/>
</dbReference>
<dbReference type="PIR" id="S18439">
    <property type="entry name" value="S18439"/>
</dbReference>
<dbReference type="RefSeq" id="NP_390674.1">
    <property type="nucleotide sequence ID" value="NC_000964.3"/>
</dbReference>
<dbReference type="RefSeq" id="WP_003229668.1">
    <property type="nucleotide sequence ID" value="NZ_OZ025638.1"/>
</dbReference>
<dbReference type="PDB" id="3J3V">
    <property type="method" value="EM"/>
    <property type="resolution" value="13.30 A"/>
    <property type="chains" value="R=1-102"/>
</dbReference>
<dbReference type="PDB" id="3J3W">
    <property type="method" value="EM"/>
    <property type="resolution" value="10.70 A"/>
    <property type="chains" value="R=1-102"/>
</dbReference>
<dbReference type="PDB" id="3J9W">
    <property type="method" value="EM"/>
    <property type="resolution" value="3.90 A"/>
    <property type="chains" value="BU=1-102"/>
</dbReference>
<dbReference type="PDB" id="5NJT">
    <property type="method" value="EM"/>
    <property type="resolution" value="3.80 A"/>
    <property type="chains" value="k=2-102"/>
</dbReference>
<dbReference type="PDB" id="6HA1">
    <property type="method" value="EM"/>
    <property type="resolution" value="3.10 A"/>
    <property type="chains" value="R=1-102"/>
</dbReference>
<dbReference type="PDB" id="6HA8">
    <property type="method" value="EM"/>
    <property type="resolution" value="3.50 A"/>
    <property type="chains" value="R=1-102"/>
</dbReference>
<dbReference type="PDB" id="6HTQ">
    <property type="method" value="EM"/>
    <property type="resolution" value="4.50 A"/>
    <property type="chains" value="R=2-102"/>
</dbReference>
<dbReference type="PDB" id="6PPF">
    <property type="method" value="EM"/>
    <property type="resolution" value="3.40 A"/>
    <property type="chains" value="R=1-102"/>
</dbReference>
<dbReference type="PDB" id="6PPK">
    <property type="method" value="EM"/>
    <property type="resolution" value="4.40 A"/>
    <property type="chains" value="R=1-102"/>
</dbReference>
<dbReference type="PDB" id="6PVK">
    <property type="method" value="EM"/>
    <property type="resolution" value="3.40 A"/>
    <property type="chains" value="R=1-102"/>
</dbReference>
<dbReference type="PDB" id="6TNN">
    <property type="method" value="EM"/>
    <property type="resolution" value="3.07 A"/>
    <property type="chains" value="k=1-102"/>
</dbReference>
<dbReference type="PDB" id="6TPQ">
    <property type="method" value="EM"/>
    <property type="resolution" value="3.07 A"/>
    <property type="chains" value="k=1-102"/>
</dbReference>
<dbReference type="PDB" id="7AQC">
    <property type="method" value="EM"/>
    <property type="resolution" value="2.99 A"/>
    <property type="chains" value="g=1-102"/>
</dbReference>
<dbReference type="PDB" id="7AQD">
    <property type="method" value="EM"/>
    <property type="resolution" value="3.10 A"/>
    <property type="chains" value="g=1-102"/>
</dbReference>
<dbReference type="PDB" id="7AS8">
    <property type="method" value="EM"/>
    <property type="resolution" value="2.90 A"/>
    <property type="chains" value="V=1-102"/>
</dbReference>
<dbReference type="PDB" id="7AS9">
    <property type="method" value="EM"/>
    <property type="resolution" value="3.50 A"/>
    <property type="chains" value="V=1-102"/>
</dbReference>
<dbReference type="PDB" id="7O5B">
    <property type="method" value="EM"/>
    <property type="resolution" value="3.33 A"/>
    <property type="chains" value="o=1-102"/>
</dbReference>
<dbReference type="PDB" id="7OPE">
    <property type="method" value="EM"/>
    <property type="resolution" value="3.20 A"/>
    <property type="chains" value="V=1-102"/>
</dbReference>
<dbReference type="PDB" id="7QGU">
    <property type="method" value="EM"/>
    <property type="resolution" value="4.75 A"/>
    <property type="chains" value="R=1-102"/>
</dbReference>
<dbReference type="PDB" id="7QH4">
    <property type="method" value="EM"/>
    <property type="resolution" value="5.45 A"/>
    <property type="chains" value="R=1-102"/>
</dbReference>
<dbReference type="PDB" id="7QV1">
    <property type="method" value="EM"/>
    <property type="resolution" value="3.50 A"/>
    <property type="chains" value="R=1-102"/>
</dbReference>
<dbReference type="PDB" id="7QV2">
    <property type="method" value="EM"/>
    <property type="resolution" value="3.50 A"/>
    <property type="chains" value="R=1-102"/>
</dbReference>
<dbReference type="PDB" id="7QV3">
    <property type="method" value="EM"/>
    <property type="resolution" value="5.14 A"/>
    <property type="chains" value="R=1-102"/>
</dbReference>
<dbReference type="PDB" id="7S9U">
    <property type="method" value="EM"/>
    <property type="resolution" value="3.20 A"/>
    <property type="chains" value="R=1-102"/>
</dbReference>
<dbReference type="PDB" id="7SAE">
    <property type="method" value="EM"/>
    <property type="resolution" value="3.00 A"/>
    <property type="chains" value="R=1-102"/>
</dbReference>
<dbReference type="PDB" id="8BUU">
    <property type="method" value="EM"/>
    <property type="resolution" value="2.90 A"/>
    <property type="chains" value="R=1-102"/>
</dbReference>
<dbReference type="PDB" id="8QCQ">
    <property type="method" value="EM"/>
    <property type="resolution" value="2.30 A"/>
    <property type="chains" value="R=1-102"/>
</dbReference>
<dbReference type="PDB" id="8QPP">
    <property type="method" value="EM"/>
    <property type="resolution" value="3.40 A"/>
    <property type="chains" value="o=2-102"/>
</dbReference>
<dbReference type="PDB" id="8R55">
    <property type="method" value="EM"/>
    <property type="resolution" value="3.57 A"/>
    <property type="chains" value="o=2-102"/>
</dbReference>
<dbReference type="PDB" id="8S1P">
    <property type="method" value="EM"/>
    <property type="resolution" value="1.96 A"/>
    <property type="chains" value="R=1-102"/>
</dbReference>
<dbReference type="PDB" id="8S1U">
    <property type="method" value="EM"/>
    <property type="resolution" value="3.40 A"/>
    <property type="chains" value="R=1-102"/>
</dbReference>
<dbReference type="PDB" id="9BS0">
    <property type="method" value="EM"/>
    <property type="resolution" value="3.30 A"/>
    <property type="chains" value="M=1-102"/>
</dbReference>
<dbReference type="PDB" id="9BSL">
    <property type="method" value="EM"/>
    <property type="resolution" value="3.10 A"/>
    <property type="chains" value="M=1-102"/>
</dbReference>
<dbReference type="PDB" id="9BSS">
    <property type="method" value="EM"/>
    <property type="resolution" value="3.10 A"/>
    <property type="chains" value="M=1-102"/>
</dbReference>
<dbReference type="PDBsum" id="3J3V"/>
<dbReference type="PDBsum" id="3J3W"/>
<dbReference type="PDBsum" id="3J9W"/>
<dbReference type="PDBsum" id="5NJT"/>
<dbReference type="PDBsum" id="6HA1"/>
<dbReference type="PDBsum" id="6HA8"/>
<dbReference type="PDBsum" id="6HTQ"/>
<dbReference type="PDBsum" id="6PPF"/>
<dbReference type="PDBsum" id="6PPK"/>
<dbReference type="PDBsum" id="6PVK"/>
<dbReference type="PDBsum" id="6TNN"/>
<dbReference type="PDBsum" id="6TPQ"/>
<dbReference type="PDBsum" id="7AQC"/>
<dbReference type="PDBsum" id="7AQD"/>
<dbReference type="PDBsum" id="7AS8"/>
<dbReference type="PDBsum" id="7AS9"/>
<dbReference type="PDBsum" id="7O5B"/>
<dbReference type="PDBsum" id="7OPE"/>
<dbReference type="PDBsum" id="7QGU"/>
<dbReference type="PDBsum" id="7QH4"/>
<dbReference type="PDBsum" id="7QV1"/>
<dbReference type="PDBsum" id="7QV2"/>
<dbReference type="PDBsum" id="7QV3"/>
<dbReference type="PDBsum" id="7S9U"/>
<dbReference type="PDBsum" id="7SAE"/>
<dbReference type="PDBsum" id="8BUU"/>
<dbReference type="PDBsum" id="8QCQ"/>
<dbReference type="PDBsum" id="8QPP"/>
<dbReference type="PDBsum" id="8R55"/>
<dbReference type="PDBsum" id="8S1P"/>
<dbReference type="PDBsum" id="8S1U"/>
<dbReference type="PDBsum" id="9BS0"/>
<dbReference type="PDBsum" id="9BSL"/>
<dbReference type="PDBsum" id="9BSS"/>
<dbReference type="EMDB" id="EMD-0176"/>
<dbReference type="EMDB" id="EMD-0177"/>
<dbReference type="EMDB" id="EMD-0270"/>
<dbReference type="EMDB" id="EMD-10535"/>
<dbReference type="EMDB" id="EMD-10543"/>
<dbReference type="EMDB" id="EMD-11862"/>
<dbReference type="EMDB" id="EMD-11864"/>
<dbReference type="EMDB" id="EMD-11889"/>
<dbReference type="EMDB" id="EMD-11890"/>
<dbReference type="EMDB" id="EMD-12734"/>
<dbReference type="EMDB" id="EMD-13017"/>
<dbReference type="EMDB" id="EMD-14157"/>
<dbReference type="EMDB" id="EMD-14158"/>
<dbReference type="EMDB" id="EMD-14159"/>
<dbReference type="EMDB" id="EMD-16246"/>
<dbReference type="EMDB" id="EMD-18332"/>
<dbReference type="EMDB" id="EMD-19638"/>
<dbReference type="EMDB" id="EMD-19641"/>
<dbReference type="EMDB" id="EMD-24950"/>
<dbReference type="EMDB" id="EMD-3656"/>
<dbReference type="EMDB" id="EMD-44849"/>
<dbReference type="EMDB" id="EMD-44869"/>
<dbReference type="EMDB" id="EMD-44871"/>
<dbReference type="SMR" id="P26908"/>
<dbReference type="FunCoup" id="P26908">
    <property type="interactions" value="446"/>
</dbReference>
<dbReference type="IntAct" id="P26908">
    <property type="interactions" value="1"/>
</dbReference>
<dbReference type="STRING" id="224308.BSU27960"/>
<dbReference type="jPOST" id="P26908"/>
<dbReference type="PaxDb" id="224308-BSU27960"/>
<dbReference type="EnsemblBacteria" id="CAB14756">
    <property type="protein sequence ID" value="CAB14756"/>
    <property type="gene ID" value="BSU_27960"/>
</dbReference>
<dbReference type="GeneID" id="76979184"/>
<dbReference type="GeneID" id="936368"/>
<dbReference type="KEGG" id="bsu:BSU27960"/>
<dbReference type="PATRIC" id="fig|224308.179.peg.3038"/>
<dbReference type="eggNOG" id="COG0261">
    <property type="taxonomic scope" value="Bacteria"/>
</dbReference>
<dbReference type="InParanoid" id="P26908"/>
<dbReference type="OrthoDB" id="9813334at2"/>
<dbReference type="PhylomeDB" id="P26908"/>
<dbReference type="BioCyc" id="BSUB:BSU27960-MONOMER"/>
<dbReference type="EvolutionaryTrace" id="P26908"/>
<dbReference type="Proteomes" id="UP000001570">
    <property type="component" value="Chromosome"/>
</dbReference>
<dbReference type="GO" id="GO:0005737">
    <property type="term" value="C:cytoplasm"/>
    <property type="evidence" value="ECO:0007669"/>
    <property type="project" value="UniProtKB-ARBA"/>
</dbReference>
<dbReference type="GO" id="GO:1990904">
    <property type="term" value="C:ribonucleoprotein complex"/>
    <property type="evidence" value="ECO:0007669"/>
    <property type="project" value="UniProtKB-KW"/>
</dbReference>
<dbReference type="GO" id="GO:0005840">
    <property type="term" value="C:ribosome"/>
    <property type="evidence" value="ECO:0007669"/>
    <property type="project" value="UniProtKB-KW"/>
</dbReference>
<dbReference type="GO" id="GO:0019843">
    <property type="term" value="F:rRNA binding"/>
    <property type="evidence" value="ECO:0007669"/>
    <property type="project" value="UniProtKB-UniRule"/>
</dbReference>
<dbReference type="GO" id="GO:0003735">
    <property type="term" value="F:structural constituent of ribosome"/>
    <property type="evidence" value="ECO:0000318"/>
    <property type="project" value="GO_Central"/>
</dbReference>
<dbReference type="GO" id="GO:0006412">
    <property type="term" value="P:translation"/>
    <property type="evidence" value="ECO:0007669"/>
    <property type="project" value="UniProtKB-UniRule"/>
</dbReference>
<dbReference type="HAMAP" id="MF_01363">
    <property type="entry name" value="Ribosomal_bL21"/>
    <property type="match status" value="1"/>
</dbReference>
<dbReference type="InterPro" id="IPR028909">
    <property type="entry name" value="bL21-like"/>
</dbReference>
<dbReference type="InterPro" id="IPR036164">
    <property type="entry name" value="bL21-like_sf"/>
</dbReference>
<dbReference type="InterPro" id="IPR001787">
    <property type="entry name" value="Ribosomal_bL21"/>
</dbReference>
<dbReference type="InterPro" id="IPR018258">
    <property type="entry name" value="Ribosomal_bL21_CS"/>
</dbReference>
<dbReference type="NCBIfam" id="TIGR00061">
    <property type="entry name" value="L21"/>
    <property type="match status" value="1"/>
</dbReference>
<dbReference type="PANTHER" id="PTHR21349">
    <property type="entry name" value="50S RIBOSOMAL PROTEIN L21"/>
    <property type="match status" value="1"/>
</dbReference>
<dbReference type="PANTHER" id="PTHR21349:SF0">
    <property type="entry name" value="LARGE RIBOSOMAL SUBUNIT PROTEIN BL21M"/>
    <property type="match status" value="1"/>
</dbReference>
<dbReference type="Pfam" id="PF00829">
    <property type="entry name" value="Ribosomal_L21p"/>
    <property type="match status" value="1"/>
</dbReference>
<dbReference type="SUPFAM" id="SSF141091">
    <property type="entry name" value="L21p-like"/>
    <property type="match status" value="1"/>
</dbReference>
<dbReference type="PROSITE" id="PS01169">
    <property type="entry name" value="RIBOSOMAL_L21"/>
    <property type="match status" value="1"/>
</dbReference>